<reference key="1">
    <citation type="journal article" date="2003" name="Plant Mol. Biol.">
        <title>Cloning and characterization of the durable tomato mosaic virus resistance gene Tm-2(2) from Lycopersicon esculentum.</title>
        <authorList>
            <person name="Lanfermeijer F.C."/>
            <person name="Dijkhuis J."/>
            <person name="Sturre M.J.G."/>
            <person name="de Haan P."/>
            <person name="Hille J."/>
        </authorList>
    </citation>
    <scope>NUCLEOTIDE SEQUENCE [GENOMIC DNA]</scope>
    <scope>FUNCTION</scope>
    <source>
        <strain>cv. ATV847</strain>
        <strain>cv. Craigella GCR267</strain>
        <strain>cv. Moneymaker</strain>
    </source>
</reference>
<reference key="2">
    <citation type="submission" date="2017-04" db="EMBL/GenBank/DDBJ databases">
        <title>Understanding the mechanism of resistance breaking on tomato by Tomato mottle mosaic virus.</title>
        <authorList>
            <person name="Sui X."/>
            <person name="Shamimuzzaman M."/>
            <person name="Zheng Y."/>
            <person name="Simmons A.M."/>
            <person name="Fei Z."/>
            <person name="Wu Z."/>
            <person name="Ling K.-S."/>
        </authorList>
    </citation>
    <scope>NUCLEOTIDE SEQUENCE [GENOMIC DNA]</scope>
    <source>
        <strain>cv. B</strain>
    </source>
</reference>
<reference key="3">
    <citation type="submission" date="2009-03" db="EMBL/GenBank/DDBJ databases">
        <title>Development of SNP markers for disease resistance genes in tomato.</title>
        <authorList>
            <person name="Shi A."/>
            <person name="Vierling R."/>
            <person name="Grazzini R."/>
            <person name="Hogue P."/>
            <person name="Miller K."/>
        </authorList>
    </citation>
    <scope>NUCLEOTIDE SEQUENCE [GENOMIC DNA] OF 228-423 AND 594-827</scope>
    <source>
        <strain>cv. Mogeor LA3471</strain>
        <strain>cv. Royal Red Cherry LA2088</strain>
        <strain>cv. VFNT Cherry LA1221</strain>
    </source>
</reference>
<reference key="4">
    <citation type="journal article" date="1989" name="Theor. Appl. Genet.">
        <title>RFLP analysis of the size of chromosomal segments retained around the Tm-2 locus of tomato during backcross breeding.</title>
        <authorList>
            <person name="Young N.D."/>
            <person name="Tanksley S.D."/>
        </authorList>
    </citation>
    <scope>IDENTIFICATION</scope>
</reference>
<reference key="5">
    <citation type="journal article" date="1992" name="J. Gen. Virol.">
        <title>Nucleotide sequence analysis of the movement genes of resistance breaking strains of tomato mosaic virus.</title>
        <authorList>
            <person name="Calder V.L."/>
            <person name="Palukaitis P."/>
        </authorList>
    </citation>
    <scope>FUNCTION</scope>
</reference>
<reference key="6">
    <citation type="journal article" date="1993" name="J. Virol.">
        <title>Two amino acid substitutions in the tomato mosaic virus 30-kilodalton movement protein confer the ability to overcome the Tm-2(2) resistance gene in the tomato.</title>
        <authorList>
            <person name="Weber H."/>
            <person name="Schultze S."/>
            <person name="Pfitzner A.J.P."/>
        </authorList>
    </citation>
    <scope>FUNCTION</scope>
    <source>
        <strain>cv. Craigella GCR267</strain>
    </source>
</reference>
<reference key="7">
    <citation type="journal article" date="1995" name="Theor. Appl. Genet.">
        <title>Identification of RAPD markers linked to the Tm-2 locus in tomato.</title>
        <authorList>
            <person name="Ohmori T."/>
            <person name="Murata M."/>
            <person name="Motoyoshi F."/>
        </authorList>
    </citation>
    <scope>GENE FAMILY</scope>
    <source>
        <strain>cv. Craigella GCR267</strain>
    </source>
</reference>
<reference key="8">
    <citation type="journal article" date="1998" name="Mol. Plant Microbe Interact.">
        <title>Tm-2(2) resistance in tomato requires recognition of the carboxy terminus of the movement protein of tomato mosaic virus.</title>
        <authorList>
            <person name="Weber H."/>
            <person name="Pfitzner A.J.P."/>
        </authorList>
    </citation>
    <scope>FUNCTION</scope>
    <source>
        <strain>cv. Craigella GCR267</strain>
    </source>
</reference>
<reference key="9">
    <citation type="journal article" date="2004" name="Arch. Virol.">
        <title>The Tomato mosaic virus 30 kDa movement protein interacts differentially with the resistance genes Tm-2 and Tm-2(2).</title>
        <authorList>
            <person name="Weber H."/>
            <person name="Ohnesorge S."/>
            <person name="Silber M.V."/>
            <person name="Pfitzner A.J.P."/>
        </authorList>
    </citation>
    <scope>FUNCTION</scope>
    <source>
        <strain>cv. Craigella GCR267</strain>
    </source>
</reference>
<reference key="10">
    <citation type="journal article" date="2005" name="J. Exp. Bot.">
        <title>The products of the broken Tm-2 and the durable Tm-2(2) resistance genes from tomato differ in four amino acids.</title>
        <authorList>
            <person name="Lanfermeijer F.C."/>
            <person name="Warmink J."/>
            <person name="Hille J."/>
        </authorList>
    </citation>
    <scope>FUNCTION</scope>
    <scope>GENE FAMILY</scope>
    <source>
        <strain>cv. Craigella GCR267</strain>
    </source>
</reference>
<reference key="11">
    <citation type="journal article" date="2007" name="Arch. Virol.">
        <title>The double-resistance-breaking Tomato mosaic virus strain ToMV1-2 contains two independent single resistance-breaking domains.</title>
        <authorList>
            <person name="Strasser M."/>
            <person name="Pfitzner A.J.P."/>
        </authorList>
    </citation>
    <scope>FUNCTION</scope>
    <source>
        <strain>cv. Craigella GCR267</strain>
    </source>
</reference>
<reference key="12">
    <citation type="journal article" date="2011" name="J. Plant Physiol.">
        <title>Identification of an amino acid residue required for differential recognition of a viral movement protein by the Tomato mosaic virus resistance gene Tm-2(2).</title>
        <authorList>
            <person name="Kobayashi M."/>
            <person name="Yamamoto-Katou A."/>
            <person name="Katou S."/>
            <person name="Hirai K."/>
            <person name="Meshi T."/>
            <person name="Ohashi Y."/>
            <person name="Mitsuhara I."/>
        </authorList>
    </citation>
    <scope>FUNCTION</scope>
    <scope>MUTAGENESIS OF ILE-257; MET-286; TYR-767 AND SER-769</scope>
</reference>
<reference key="13">
    <citation type="journal article" date="2013" name="Plant Physiol.">
        <title>The rubisco small subunit is involved in tobamovirus movement and Tm-2(2)-mediated extreme resistance.</title>
        <authorList>
            <person name="Zhao J."/>
            <person name="Liu Q."/>
            <person name="Zhang H."/>
            <person name="Jia Q."/>
            <person name="Hong Y."/>
            <person name="Liu Y."/>
        </authorList>
    </citation>
    <scope>FUNCTION</scope>
</reference>
<reference key="14">
    <citation type="journal article" date="2017" name="Plant Physiol.">
        <title>Antiviral resistance protein Tm-2(2) functions on the plasma membrane.</title>
        <authorList>
            <person name="Chen T."/>
            <person name="Liu D."/>
            <person name="Niu X."/>
            <person name="Wang J."/>
            <person name="Qian L."/>
            <person name="Han L."/>
            <person name="Liu N."/>
            <person name="Zhao J."/>
            <person name="Hong Y."/>
            <person name="Liu Y."/>
        </authorList>
    </citation>
    <scope>FUNCTION</scope>
    <scope>INTERACTION WITH TOBACCO MOSAIC VIRUS MOUVEMENT PROTEIN (MICROBIAL INFECTION)</scope>
    <scope>SUBCELLULAR LOCATION</scope>
    <scope>MUTAGENESIS OF LYS-191 AND ASP-481</scope>
</reference>
<reference key="15">
    <citation type="journal article" date="2017" name="PLoS ONE">
        <title>A new Israeli tobamovirus isolate infects tomato plants harboring Tm-2(2) resistance genes.</title>
        <authorList>
            <person name="Luria N."/>
            <person name="Smith E."/>
            <person name="Reingold V."/>
            <person name="Bekelman I."/>
            <person name="Lapidot M."/>
            <person name="Levin I."/>
            <person name="Elad N."/>
            <person name="Tam Y."/>
            <person name="Sela N."/>
            <person name="Abu-Ras A."/>
            <person name="Ezra N."/>
            <person name="Haberman A."/>
            <person name="Yitzhak L."/>
            <person name="Lachman O."/>
            <person name="Dombrovsky A."/>
        </authorList>
    </citation>
    <scope>FUNCTION</scope>
    <source>
        <strain>cv. T-5</strain>
        <strain>cv. Vendor</strain>
    </source>
</reference>
<reference key="16">
    <citation type="journal article" date="2018" name="Arch. Virol.">
        <title>Using genomic analysis to identify tomato Tm-2 resistance-breaking mutations and their underlying evolutionary path in a new and emerging tobamovirus.</title>
        <authorList>
            <person name="Maayan Y."/>
            <person name="Pandaranayaka E.P.J."/>
            <person name="Srivastava D.A."/>
            <person name="Lapidot M."/>
            <person name="Levin I."/>
            <person name="Dombrovsky A."/>
            <person name="Harel A."/>
        </authorList>
    </citation>
    <scope>FUNCTION</scope>
</reference>
<reference key="17">
    <citation type="journal article" date="2018" name="Front. Plant Sci.">
        <title>Hsp90 interacts with Tm-2(2) and is essential for Tm-22-mediated resistance to tobacco mosaic virus.</title>
        <authorList>
            <person name="Qian L."/>
            <person name="Zhao J."/>
            <person name="Du Y."/>
            <person name="Zhao X."/>
            <person name="Han M."/>
            <person name="Liu Y."/>
        </authorList>
    </citation>
    <scope>INTERACTION WITH HSP90-1</scope>
</reference>
<name>TM22_SOLLC</name>
<comment type="function">
    <text evidence="2 3 4 5 6 7 8 9 10 11 13 14">Inhibitor of viral mouvements which confers resistance to some tobamoviruses including tomato mosaic virus (ToMV) (e.g. strains L, B7 and ToMV1-2) and tobacco mosaic virus (TMV), but not to resistance-breaking isolates (e.g. LIIA and ToMV2(2)) ToMV and tomato brown rugose fruit virus (ToBRFV) (PubMed:14558663, PubMed:15290376, PubMed:16172136, PubMed:17238011, PubMed:1730937, PubMed:21310506, PubMed:28107419, PubMed:29582165, PubMed:8411345, PubMed:9612948). Elicits a hypersensitive reaction in response to avirulent (Avr) movement proteins from resistance inducing tobamoviruses (e.g. ToMV and TMV) strains, thus leading to programmed cell death; this local extreme resistance requires rbcS (PubMed:15290376, PubMed:21310506, PubMed:23148080, PubMed:28258211).</text>
</comment>
<comment type="subunit">
    <text evidence="10">(Microbial infection) Interacts with tobamoviruses mouvement protein (e.g. tobacco mosaic virus (TMV) MP, AC P03583) at the plasma membrane; this interaction triggers defense responses leading to programmed cell death.</text>
</comment>
<comment type="subunit">
    <text evidence="12">Binds to HSP90 proteins (e.g. HSP90-1 and Nicotiana benthamiana HSP90-1); this interaction seems required for defense responses toward tobamoviruses.</text>
</comment>
<comment type="subcellular location">
    <subcellularLocation>
        <location evidence="10">Cell membrane</location>
        <topology evidence="10">Peripheral membrane protein</topology>
        <orientation evidence="20">Cytoplasmic side</orientation>
    </subcellularLocation>
</comment>
<comment type="miscellaneous">
    <text evidence="2">The Tm-2, Tm-2(2) and Tm-2nv alleles present in the tomato mosaic virus (ToMV/TMV)-resistant tomato cv. Craigella isolates GCR236 (AC Q71BH0), cv. Craigella GCR267 (AC Q71BG9) and cv. Yukang 2 (AC Q5MLE9), respectively confers resistance to ToMV but not the tm-2 allele present in the ToMV-susceptible tomato cv. Craigella isolate GCR26 (AC Q71BH1).</text>
</comment>
<comment type="similarity">
    <text evidence="19">Belongs to the disease resistance NB-LRR family.</text>
</comment>
<protein>
    <recommendedName>
        <fullName evidence="15 17">ToMV resistance protein Tm-2(2)</fullName>
    </recommendedName>
    <alternativeName>
        <fullName evidence="18">Disease resistance protein Tm-2(2)</fullName>
    </alternativeName>
    <alternativeName>
        <fullName evidence="16">ToMV resistance protein Tm-2a</fullName>
    </alternativeName>
</protein>
<keyword id="KW-0067">ATP-binding</keyword>
<keyword id="KW-1003">Cell membrane</keyword>
<keyword id="KW-0175">Coiled coil</keyword>
<keyword id="KW-0945">Host-virus interaction</keyword>
<keyword id="KW-0381">Hypersensitive response</keyword>
<keyword id="KW-0433">Leucine-rich repeat</keyword>
<keyword id="KW-0472">Membrane</keyword>
<keyword id="KW-0547">Nucleotide-binding</keyword>
<keyword id="KW-0611">Plant defense</keyword>
<keyword id="KW-1185">Reference proteome</keyword>
<keyword id="KW-0677">Repeat</keyword>
<feature type="chain" id="PRO_0000448716" description="ToMV resistance protein Tm-2(2)">
    <location>
        <begin position="1"/>
        <end position="861"/>
    </location>
</feature>
<feature type="domain" description="NB-ARC" evidence="1">
    <location>
        <begin position="162"/>
        <end position="388"/>
    </location>
</feature>
<feature type="repeat" description="LRR 1" evidence="1">
    <location>
        <begin position="225"/>
        <end position="248"/>
    </location>
</feature>
<feature type="repeat" description="LRR 2" evidence="1">
    <location>
        <begin position="305"/>
        <end position="327"/>
    </location>
</feature>
<feature type="repeat" description="LRR 3" evidence="1">
    <location>
        <begin position="388"/>
        <end position="411"/>
    </location>
</feature>
<feature type="repeat" description="LRR 4" evidence="1">
    <location>
        <begin position="449"/>
        <end position="472"/>
    </location>
</feature>
<feature type="repeat" description="LRR 5" evidence="1">
    <location>
        <begin position="510"/>
        <end position="536"/>
    </location>
</feature>
<feature type="repeat" description="LRR 6" evidence="1">
    <location>
        <begin position="585"/>
        <end position="608"/>
    </location>
</feature>
<feature type="repeat" description="LRR 7" evidence="1">
    <location>
        <begin position="609"/>
        <end position="631"/>
    </location>
</feature>
<feature type="repeat" description="LRR 8" evidence="1">
    <location>
        <begin position="652"/>
        <end position="680"/>
    </location>
</feature>
<feature type="repeat" description="LRR 9" evidence="1">
    <location>
        <begin position="689"/>
        <end position="710"/>
    </location>
</feature>
<feature type="repeat" description="LRR 10" evidence="1">
    <location>
        <begin position="712"/>
        <end position="735"/>
    </location>
</feature>
<feature type="repeat" description="LRR 11" evidence="1">
    <location>
        <begin position="736"/>
        <end position="758"/>
    </location>
</feature>
<feature type="repeat" description="LRR 12" evidence="1">
    <location>
        <begin position="784"/>
        <end position="810"/>
    </location>
</feature>
<feature type="repeat" description="LRR 13" evidence="1">
    <location>
        <begin position="811"/>
        <end position="835"/>
    </location>
</feature>
<feature type="coiled-coil region" evidence="1">
    <location>
        <begin position="63"/>
        <end position="83"/>
    </location>
</feature>
<feature type="binding site" evidence="1">
    <location>
        <begin position="185"/>
        <end position="192"/>
    </location>
    <ligand>
        <name>ATP</name>
        <dbReference type="ChEBI" id="CHEBI:30616"/>
    </ligand>
</feature>
<feature type="site" description="Contributes to the specific recognition of ToMV-B7 viral mouvement protein and subsequent resistance to ToMV-B7" evidence="7">
    <location>
        <position position="767"/>
    </location>
</feature>
<feature type="mutagenesis site" description="Partially soluble, disturbed subcellular localization." evidence="10">
    <original>K</original>
    <variation>R</variation>
    <location>
        <position position="191"/>
    </location>
</feature>
<feature type="mutagenesis site" description="ToMV-B7 viral mouvement protein-dependent induced cell death." evidence="7">
    <original>I</original>
    <variation>F</variation>
    <location>
        <position position="257"/>
    </location>
</feature>
<feature type="mutagenesis site" description="ToMV-B7 viral mouvement protein-dependent induced cell death." evidence="7">
    <original>M</original>
    <variation>I</variation>
    <location>
        <position position="286"/>
    </location>
</feature>
<feature type="mutagenesis site" description="Autoactive, constitutive cell death induction activity and normal plasma membrane localization." evidence="10">
    <original>D</original>
    <variation>V</variation>
    <location>
        <position position="481"/>
    </location>
</feature>
<feature type="mutagenesis site" description="Impaired ToMV-B7 viral mouvement protein-dependent induced cell death." evidence="7">
    <original>Y</original>
    <variation>N</variation>
    <location>
        <position position="767"/>
    </location>
</feature>
<feature type="mutagenesis site" description="ToMV-B7 viral mouvement protein-dependent induced cell death." evidence="7">
    <original>S</original>
    <variation>T</variation>
    <location>
        <position position="769"/>
    </location>
</feature>
<sequence>MAEILLTSVINKSVEIAGNLLIQEGKRLYWLKEDIDWLQREMRHIRSYVDNAKAKEAGGDSRVKNLLKDIQELAGDVEDLLDDFLPKIQQSNKFNYCLKRSSFADEFAMEIEKIKRRVVDIDRIRKTYNIIDTDNNNDDCVLLDRRRLFLHADETEIIGLDDDFNMLQAKLLNQDLHYGVVSIVGMPGLGKTTLAKKLYRLIRDQFECSGLVYVSQQPRASEILLDIAKQIGLTEQKMKENLEDNLRSLLKIKRYVILLDDIWDVEIWDDLKLVLPECDSKVGSRMIITSRNSNVGRYIGGESSLHALQPLESEKSFELFTKKIFNFDDNNSWANASPDLVNIGRNIVGRCGGIPLAIVVTAGMLRARERTEHAWNRVLESMGHKVQDGCAKVLALSYNDLPIASRPCFLYFGLYPEDHEIRAFDLINMWIAEKFIVVNSGNRREAEDLAEDVLNDLVSRNLIQLAKRTYNGRISSCRIHDLLHSLCVDLAKESNFFHTAHDAFGDPGNVARLRRITFYSDNVMIEFFRSNPKLEKLRVLFCFAKDPSIFSHMAYFDFKLLHTLVVVMSQSFQAYVTIPSKFGNMTCLRYLRLEGNICGKLPNSIVKLTRLETIDIDRRSLIQPPSGVWESKHLRHLCYRDYGQACNSCFSISSFYPNIYSLHPNNLQTLMWIPDKFFEPRLLHRLINLRKLGILGVSNSTVKMLSIFSPVLKALEVLKLSFSSDPSEQIKLSSYPHIAKLHLNVNRTMALNSQSFPPNLIKLTLAYFSVDRYILAVLKTFPKLRKLKMFICKYNEEKMDLSGEANGYSFPQLEVLHIHSPNGLSEVTCTDDVSMPKLKKLLLTGFHCRISLSERLKKLSK</sequence>
<evidence type="ECO:0000255" key="1"/>
<evidence type="ECO:0000269" key="2">
    <source>
    </source>
</evidence>
<evidence type="ECO:0000269" key="3">
    <source>
    </source>
</evidence>
<evidence type="ECO:0000269" key="4">
    <source>
    </source>
</evidence>
<evidence type="ECO:0000269" key="5">
    <source>
    </source>
</evidence>
<evidence type="ECO:0000269" key="6">
    <source>
    </source>
</evidence>
<evidence type="ECO:0000269" key="7">
    <source>
    </source>
</evidence>
<evidence type="ECO:0000269" key="8">
    <source>
    </source>
</evidence>
<evidence type="ECO:0000269" key="9">
    <source>
    </source>
</evidence>
<evidence type="ECO:0000269" key="10">
    <source>
    </source>
</evidence>
<evidence type="ECO:0000269" key="11">
    <source>
    </source>
</evidence>
<evidence type="ECO:0000269" key="12">
    <source>
    </source>
</evidence>
<evidence type="ECO:0000269" key="13">
    <source>
    </source>
</evidence>
<evidence type="ECO:0000269" key="14">
    <source>
    </source>
</evidence>
<evidence type="ECO:0000303" key="15">
    <source>
    </source>
</evidence>
<evidence type="ECO:0000303" key="16">
    <source>
    </source>
</evidence>
<evidence type="ECO:0000303" key="17">
    <source ref="2"/>
</evidence>
<evidence type="ECO:0000303" key="18">
    <source ref="3"/>
</evidence>
<evidence type="ECO:0000305" key="19"/>
<evidence type="ECO:0000305" key="20">
    <source>
    </source>
</evidence>
<gene>
    <name evidence="15 17" type="primary">Tm-2(2)</name>
    <name evidence="16" type="synonym">Tm-2a</name>
</gene>
<accession>Q71BG9</accession>
<accession>C3UZH7</accession>
<accession>C3UZI2</accession>
<proteinExistence type="evidence at protein level"/>
<organism>
    <name type="scientific">Solanum lycopersicum</name>
    <name type="common">Tomato</name>
    <name type="synonym">Lycopersicon esculentum</name>
    <dbReference type="NCBI Taxonomy" id="4081"/>
    <lineage>
        <taxon>Eukaryota</taxon>
        <taxon>Viridiplantae</taxon>
        <taxon>Streptophyta</taxon>
        <taxon>Embryophyta</taxon>
        <taxon>Tracheophyta</taxon>
        <taxon>Spermatophyta</taxon>
        <taxon>Magnoliopsida</taxon>
        <taxon>eudicotyledons</taxon>
        <taxon>Gunneridae</taxon>
        <taxon>Pentapetalae</taxon>
        <taxon>asterids</taxon>
        <taxon>lamiids</taxon>
        <taxon>Solanales</taxon>
        <taxon>Solanaceae</taxon>
        <taxon>Solanoideae</taxon>
        <taxon>Solaneae</taxon>
        <taxon>Solanum</taxon>
        <taxon>Solanum subgen. Lycopersicon</taxon>
    </lineage>
</organism>
<dbReference type="EMBL" id="AF536201">
    <property type="protein sequence ID" value="AAQ10736.1"/>
    <property type="molecule type" value="Genomic_DNA"/>
</dbReference>
<dbReference type="EMBL" id="KY910827">
    <property type="protein sequence ID" value="AVQ09319.1"/>
    <property type="molecule type" value="Genomic_DNA"/>
</dbReference>
<dbReference type="EMBL" id="FJ817597">
    <property type="protein sequence ID" value="ACO52370.1"/>
    <property type="molecule type" value="Genomic_DNA"/>
</dbReference>
<dbReference type="EMBL" id="FJ817602">
    <property type="protein sequence ID" value="ACO52375.1"/>
    <property type="molecule type" value="Genomic_DNA"/>
</dbReference>
<dbReference type="EMBL" id="FJ817603">
    <property type="protein sequence ID" value="ACO52376.1"/>
    <property type="molecule type" value="Genomic_DNA"/>
</dbReference>
<dbReference type="EMBL" id="FJ817606">
    <property type="protein sequence ID" value="ACO52379.1"/>
    <property type="molecule type" value="Genomic_DNA"/>
</dbReference>
<dbReference type="SMR" id="Q71BG9"/>
<dbReference type="STRING" id="4081.Q71BG9"/>
<dbReference type="InParanoid" id="Q71BG9"/>
<dbReference type="Proteomes" id="UP000004994">
    <property type="component" value="Unplaced"/>
</dbReference>
<dbReference type="ExpressionAtlas" id="Q71BG9">
    <property type="expression patterns" value="baseline and differential"/>
</dbReference>
<dbReference type="GO" id="GO:0005886">
    <property type="term" value="C:plasma membrane"/>
    <property type="evidence" value="ECO:0000314"/>
    <property type="project" value="UniProtKB"/>
</dbReference>
<dbReference type="GO" id="GO:0043531">
    <property type="term" value="F:ADP binding"/>
    <property type="evidence" value="ECO:0007669"/>
    <property type="project" value="InterPro"/>
</dbReference>
<dbReference type="GO" id="GO:0005524">
    <property type="term" value="F:ATP binding"/>
    <property type="evidence" value="ECO:0007669"/>
    <property type="project" value="UniProtKB-KW"/>
</dbReference>
<dbReference type="GO" id="GO:0016887">
    <property type="term" value="F:ATP hydrolysis activity"/>
    <property type="evidence" value="ECO:0007669"/>
    <property type="project" value="InterPro"/>
</dbReference>
<dbReference type="GO" id="GO:0098542">
    <property type="term" value="P:defense response to other organism"/>
    <property type="evidence" value="ECO:0000318"/>
    <property type="project" value="GO_Central"/>
</dbReference>
<dbReference type="GO" id="GO:0051607">
    <property type="term" value="P:defense response to virus"/>
    <property type="evidence" value="ECO:0000314"/>
    <property type="project" value="UniProtKB"/>
</dbReference>
<dbReference type="GO" id="GO:0009626">
    <property type="term" value="P:plant-type hypersensitive response"/>
    <property type="evidence" value="ECO:0000314"/>
    <property type="project" value="UniProtKB"/>
</dbReference>
<dbReference type="CDD" id="cd14798">
    <property type="entry name" value="RX-CC_like"/>
    <property type="match status" value="1"/>
</dbReference>
<dbReference type="FunFam" id="3.40.50.300:FF:001091">
    <property type="entry name" value="Probable disease resistance protein At1g61300"/>
    <property type="match status" value="1"/>
</dbReference>
<dbReference type="FunFam" id="1.10.10.10:FF:000322">
    <property type="entry name" value="Probable disease resistance protein At1g63360"/>
    <property type="match status" value="1"/>
</dbReference>
<dbReference type="Gene3D" id="1.20.5.4130">
    <property type="match status" value="1"/>
</dbReference>
<dbReference type="Gene3D" id="1.10.8.430">
    <property type="entry name" value="Helical domain of apoptotic protease-activating factors"/>
    <property type="match status" value="1"/>
</dbReference>
<dbReference type="Gene3D" id="3.40.50.300">
    <property type="entry name" value="P-loop containing nucleotide triphosphate hydrolases"/>
    <property type="match status" value="1"/>
</dbReference>
<dbReference type="Gene3D" id="3.80.10.10">
    <property type="entry name" value="Ribonuclease Inhibitor"/>
    <property type="match status" value="1"/>
</dbReference>
<dbReference type="Gene3D" id="1.10.10.10">
    <property type="entry name" value="Winged helix-like DNA-binding domain superfamily/Winged helix DNA-binding domain"/>
    <property type="match status" value="1"/>
</dbReference>
<dbReference type="InterPro" id="IPR003593">
    <property type="entry name" value="AAA+_ATPase"/>
</dbReference>
<dbReference type="InterPro" id="IPR042197">
    <property type="entry name" value="Apaf_helical"/>
</dbReference>
<dbReference type="InterPro" id="IPR044974">
    <property type="entry name" value="Disease_R_plants"/>
</dbReference>
<dbReference type="InterPro" id="IPR032675">
    <property type="entry name" value="LRR_dom_sf"/>
</dbReference>
<dbReference type="InterPro" id="IPR055414">
    <property type="entry name" value="LRR_R13L4/SHOC2-like"/>
</dbReference>
<dbReference type="InterPro" id="IPR002182">
    <property type="entry name" value="NB-ARC"/>
</dbReference>
<dbReference type="InterPro" id="IPR027417">
    <property type="entry name" value="P-loop_NTPase"/>
</dbReference>
<dbReference type="InterPro" id="IPR038005">
    <property type="entry name" value="RX-like_CC"/>
</dbReference>
<dbReference type="InterPro" id="IPR041118">
    <property type="entry name" value="Rx_N"/>
</dbReference>
<dbReference type="InterPro" id="IPR036388">
    <property type="entry name" value="WH-like_DNA-bd_sf"/>
</dbReference>
<dbReference type="PANTHER" id="PTHR23155">
    <property type="entry name" value="DISEASE RESISTANCE PROTEIN RP"/>
    <property type="match status" value="1"/>
</dbReference>
<dbReference type="PANTHER" id="PTHR23155:SF1238">
    <property type="entry name" value="TOMV SUSCEPTIBLE PROTEIN TM-2"/>
    <property type="match status" value="1"/>
</dbReference>
<dbReference type="Pfam" id="PF23598">
    <property type="entry name" value="LRR_14"/>
    <property type="match status" value="1"/>
</dbReference>
<dbReference type="Pfam" id="PF00931">
    <property type="entry name" value="NB-ARC"/>
    <property type="match status" value="1"/>
</dbReference>
<dbReference type="Pfam" id="PF18052">
    <property type="entry name" value="Rx_N"/>
    <property type="match status" value="1"/>
</dbReference>
<dbReference type="Pfam" id="PF23559">
    <property type="entry name" value="WH_DRP"/>
    <property type="match status" value="1"/>
</dbReference>
<dbReference type="PRINTS" id="PR00364">
    <property type="entry name" value="DISEASERSIST"/>
</dbReference>
<dbReference type="SMART" id="SM00382">
    <property type="entry name" value="AAA"/>
    <property type="match status" value="1"/>
</dbReference>
<dbReference type="SUPFAM" id="SSF52058">
    <property type="entry name" value="L domain-like"/>
    <property type="match status" value="1"/>
</dbReference>
<dbReference type="SUPFAM" id="SSF52540">
    <property type="entry name" value="P-loop containing nucleoside triphosphate hydrolases"/>
    <property type="match status" value="1"/>
</dbReference>